<protein>
    <recommendedName>
        <fullName evidence="1">Histidinol dehydrogenase</fullName>
        <shortName evidence="1">HDH</shortName>
        <ecNumber evidence="1">1.1.1.23</ecNumber>
    </recommendedName>
</protein>
<name>HISX_METMP</name>
<feature type="chain" id="PRO_0000135898" description="Histidinol dehydrogenase">
    <location>
        <begin position="1"/>
        <end position="424"/>
    </location>
</feature>
<feature type="active site" description="Proton acceptor" evidence="1">
    <location>
        <position position="322"/>
    </location>
</feature>
<feature type="active site" description="Proton acceptor" evidence="1">
    <location>
        <position position="323"/>
    </location>
</feature>
<feature type="binding site" evidence="1">
    <location>
        <position position="127"/>
    </location>
    <ligand>
        <name>NAD(+)</name>
        <dbReference type="ChEBI" id="CHEBI:57540"/>
    </ligand>
</feature>
<feature type="binding site" evidence="1">
    <location>
        <position position="188"/>
    </location>
    <ligand>
        <name>NAD(+)</name>
        <dbReference type="ChEBI" id="CHEBI:57540"/>
    </ligand>
</feature>
<feature type="binding site" evidence="1">
    <location>
        <position position="211"/>
    </location>
    <ligand>
        <name>NAD(+)</name>
        <dbReference type="ChEBI" id="CHEBI:57540"/>
    </ligand>
</feature>
<feature type="binding site" evidence="1">
    <location>
        <position position="234"/>
    </location>
    <ligand>
        <name>substrate</name>
    </ligand>
</feature>
<feature type="binding site" evidence="1">
    <location>
        <position position="256"/>
    </location>
    <ligand>
        <name>substrate</name>
    </ligand>
</feature>
<feature type="binding site" evidence="1">
    <location>
        <position position="256"/>
    </location>
    <ligand>
        <name>Zn(2+)</name>
        <dbReference type="ChEBI" id="CHEBI:29105"/>
    </ligand>
</feature>
<feature type="binding site" evidence="1">
    <location>
        <position position="259"/>
    </location>
    <ligand>
        <name>substrate</name>
    </ligand>
</feature>
<feature type="binding site" evidence="1">
    <location>
        <position position="259"/>
    </location>
    <ligand>
        <name>Zn(2+)</name>
        <dbReference type="ChEBI" id="CHEBI:29105"/>
    </ligand>
</feature>
<feature type="binding site" evidence="1">
    <location>
        <position position="323"/>
    </location>
    <ligand>
        <name>substrate</name>
    </ligand>
</feature>
<feature type="binding site" evidence="1">
    <location>
        <position position="356"/>
    </location>
    <ligand>
        <name>substrate</name>
    </ligand>
</feature>
<feature type="binding site" evidence="1">
    <location>
        <position position="356"/>
    </location>
    <ligand>
        <name>Zn(2+)</name>
        <dbReference type="ChEBI" id="CHEBI:29105"/>
    </ligand>
</feature>
<feature type="binding site" evidence="1">
    <location>
        <position position="410"/>
    </location>
    <ligand>
        <name>substrate</name>
    </ligand>
</feature>
<feature type="binding site" evidence="1">
    <location>
        <position position="415"/>
    </location>
    <ligand>
        <name>substrate</name>
    </ligand>
</feature>
<feature type="binding site" evidence="1">
    <location>
        <position position="415"/>
    </location>
    <ligand>
        <name>Zn(2+)</name>
        <dbReference type="ChEBI" id="CHEBI:29105"/>
    </ligand>
</feature>
<sequence>MIVKKISKLNEKELDIILNRNKTNISGILPTVSEILENVQKNGDNALKEYTKKFDGVDIDNFKVSTEEIDKAYDKIDSKVVESLEKAYENIREFHEIQFKNLNEWEIDKKGIKAGQIIRPVEKAGCYVPGGRAFYPSTVLMTVTPAKVAGVKEVIVTSPPNGTEGNPATLVASDIAKADGIYKIGGAQAIGALAYGTKSIPKVDIIVGPGNIFVTAAKKLVYGEVSIDFPAGPSEVLIMCDESSNEEYVAMDFLAQAEHDPNASCIITVTSEKKAEKIKERILMEIKTAKRTEIIEKSILNSAIVIGSIDECIELSNSYAPEHLEIMTKNPREVLKSIENAGSIFLGNYAPVPVGDYASGTNHVLPTSACAKMYSGLSVETFIKKPTVQELTKEGLLGISDIVTTLAEAEGLFNHSEAVKRRLN</sequence>
<keyword id="KW-0028">Amino-acid biosynthesis</keyword>
<keyword id="KW-0368">Histidine biosynthesis</keyword>
<keyword id="KW-0479">Metal-binding</keyword>
<keyword id="KW-0520">NAD</keyword>
<keyword id="KW-0560">Oxidoreductase</keyword>
<keyword id="KW-1185">Reference proteome</keyword>
<keyword id="KW-0862">Zinc</keyword>
<comment type="function">
    <text evidence="1">Catalyzes the sequential NAD-dependent oxidations of L-histidinol to L-histidinaldehyde and then to L-histidine.</text>
</comment>
<comment type="catalytic activity">
    <reaction evidence="1">
        <text>L-histidinol + 2 NAD(+) + H2O = L-histidine + 2 NADH + 3 H(+)</text>
        <dbReference type="Rhea" id="RHEA:20641"/>
        <dbReference type="ChEBI" id="CHEBI:15377"/>
        <dbReference type="ChEBI" id="CHEBI:15378"/>
        <dbReference type="ChEBI" id="CHEBI:57540"/>
        <dbReference type="ChEBI" id="CHEBI:57595"/>
        <dbReference type="ChEBI" id="CHEBI:57699"/>
        <dbReference type="ChEBI" id="CHEBI:57945"/>
        <dbReference type="EC" id="1.1.1.23"/>
    </reaction>
</comment>
<comment type="cofactor">
    <cofactor evidence="1">
        <name>Zn(2+)</name>
        <dbReference type="ChEBI" id="CHEBI:29105"/>
    </cofactor>
    <text evidence="1">Binds 1 zinc ion per subunit.</text>
</comment>
<comment type="pathway">
    <text evidence="1">Amino-acid biosynthesis; L-histidine biosynthesis; L-histidine from 5-phospho-alpha-D-ribose 1-diphosphate: step 9/9.</text>
</comment>
<comment type="similarity">
    <text evidence="1">Belongs to the histidinol dehydrogenase family.</text>
</comment>
<proteinExistence type="inferred from homology"/>
<accession>P60862</accession>
<organism>
    <name type="scientific">Methanococcus maripaludis (strain DSM 14266 / JCM 13030 / NBRC 101832 / S2 / LL)</name>
    <dbReference type="NCBI Taxonomy" id="267377"/>
    <lineage>
        <taxon>Archaea</taxon>
        <taxon>Methanobacteriati</taxon>
        <taxon>Methanobacteriota</taxon>
        <taxon>Methanomada group</taxon>
        <taxon>Methanococci</taxon>
        <taxon>Methanococcales</taxon>
        <taxon>Methanococcaceae</taxon>
        <taxon>Methanococcus</taxon>
    </lineage>
</organism>
<dbReference type="EC" id="1.1.1.23" evidence="1"/>
<dbReference type="EMBL" id="BX950229">
    <property type="protein sequence ID" value="CAF30524.1"/>
    <property type="molecule type" value="Genomic_DNA"/>
</dbReference>
<dbReference type="RefSeq" id="WP_011170912.1">
    <property type="nucleotide sequence ID" value="NC_005791.1"/>
</dbReference>
<dbReference type="SMR" id="P60862"/>
<dbReference type="STRING" id="267377.MMP0968"/>
<dbReference type="EnsemblBacteria" id="CAF30524">
    <property type="protein sequence ID" value="CAF30524"/>
    <property type="gene ID" value="MMP0968"/>
</dbReference>
<dbReference type="GeneID" id="2762510"/>
<dbReference type="KEGG" id="mmp:MMP0968"/>
<dbReference type="PATRIC" id="fig|267377.15.peg.996"/>
<dbReference type="eggNOG" id="arCOG04352">
    <property type="taxonomic scope" value="Archaea"/>
</dbReference>
<dbReference type="HOGENOM" id="CLU_006732_3_0_2"/>
<dbReference type="OrthoDB" id="36308at2157"/>
<dbReference type="UniPathway" id="UPA00031">
    <property type="reaction ID" value="UER00014"/>
</dbReference>
<dbReference type="Proteomes" id="UP000000590">
    <property type="component" value="Chromosome"/>
</dbReference>
<dbReference type="GO" id="GO:0005737">
    <property type="term" value="C:cytoplasm"/>
    <property type="evidence" value="ECO:0007669"/>
    <property type="project" value="TreeGrafter"/>
</dbReference>
<dbReference type="GO" id="GO:0004399">
    <property type="term" value="F:histidinol dehydrogenase activity"/>
    <property type="evidence" value="ECO:0007669"/>
    <property type="project" value="UniProtKB-UniRule"/>
</dbReference>
<dbReference type="GO" id="GO:0051287">
    <property type="term" value="F:NAD binding"/>
    <property type="evidence" value="ECO:0007669"/>
    <property type="project" value="InterPro"/>
</dbReference>
<dbReference type="GO" id="GO:0008270">
    <property type="term" value="F:zinc ion binding"/>
    <property type="evidence" value="ECO:0007669"/>
    <property type="project" value="UniProtKB-UniRule"/>
</dbReference>
<dbReference type="GO" id="GO:0000105">
    <property type="term" value="P:L-histidine biosynthetic process"/>
    <property type="evidence" value="ECO:0007669"/>
    <property type="project" value="UniProtKB-UniRule"/>
</dbReference>
<dbReference type="CDD" id="cd06572">
    <property type="entry name" value="Histidinol_dh"/>
    <property type="match status" value="1"/>
</dbReference>
<dbReference type="FunFam" id="3.40.50.1980:FF:000001">
    <property type="entry name" value="Histidinol dehydrogenase"/>
    <property type="match status" value="1"/>
</dbReference>
<dbReference type="FunFam" id="3.40.50.1980:FF:000026">
    <property type="entry name" value="Histidinol dehydrogenase"/>
    <property type="match status" value="1"/>
</dbReference>
<dbReference type="Gene3D" id="1.20.5.1300">
    <property type="match status" value="1"/>
</dbReference>
<dbReference type="Gene3D" id="3.40.50.1980">
    <property type="entry name" value="Nitrogenase molybdenum iron protein domain"/>
    <property type="match status" value="2"/>
</dbReference>
<dbReference type="HAMAP" id="MF_01024">
    <property type="entry name" value="HisD"/>
    <property type="match status" value="1"/>
</dbReference>
<dbReference type="InterPro" id="IPR016161">
    <property type="entry name" value="Ald_DH/histidinol_DH"/>
</dbReference>
<dbReference type="InterPro" id="IPR001692">
    <property type="entry name" value="Histidinol_DH_CS"/>
</dbReference>
<dbReference type="InterPro" id="IPR022695">
    <property type="entry name" value="Histidinol_DH_monofunct"/>
</dbReference>
<dbReference type="InterPro" id="IPR012131">
    <property type="entry name" value="Hstdl_DH"/>
</dbReference>
<dbReference type="NCBIfam" id="TIGR00069">
    <property type="entry name" value="hisD"/>
    <property type="match status" value="1"/>
</dbReference>
<dbReference type="PANTHER" id="PTHR21256:SF2">
    <property type="entry name" value="HISTIDINE BIOSYNTHESIS TRIFUNCTIONAL PROTEIN"/>
    <property type="match status" value="1"/>
</dbReference>
<dbReference type="PANTHER" id="PTHR21256">
    <property type="entry name" value="HISTIDINOL DEHYDROGENASE HDH"/>
    <property type="match status" value="1"/>
</dbReference>
<dbReference type="Pfam" id="PF00815">
    <property type="entry name" value="Histidinol_dh"/>
    <property type="match status" value="1"/>
</dbReference>
<dbReference type="PIRSF" id="PIRSF000099">
    <property type="entry name" value="Histidinol_dh"/>
    <property type="match status" value="1"/>
</dbReference>
<dbReference type="PRINTS" id="PR00083">
    <property type="entry name" value="HOLDHDRGNASE"/>
</dbReference>
<dbReference type="SUPFAM" id="SSF53720">
    <property type="entry name" value="ALDH-like"/>
    <property type="match status" value="1"/>
</dbReference>
<dbReference type="PROSITE" id="PS00611">
    <property type="entry name" value="HISOL_DEHYDROGENASE"/>
    <property type="match status" value="1"/>
</dbReference>
<gene>
    <name evidence="1" type="primary">hisD</name>
    <name type="ordered locus">MMP0968</name>
</gene>
<evidence type="ECO:0000255" key="1">
    <source>
        <dbReference type="HAMAP-Rule" id="MF_01024"/>
    </source>
</evidence>
<reference key="1">
    <citation type="journal article" date="2004" name="J. Bacteriol.">
        <title>Complete genome sequence of the genetically tractable hydrogenotrophic methanogen Methanococcus maripaludis.</title>
        <authorList>
            <person name="Hendrickson E.L."/>
            <person name="Kaul R."/>
            <person name="Zhou Y."/>
            <person name="Bovee D."/>
            <person name="Chapman P."/>
            <person name="Chung J."/>
            <person name="Conway de Macario E."/>
            <person name="Dodsworth J.A."/>
            <person name="Gillett W."/>
            <person name="Graham D.E."/>
            <person name="Hackett M."/>
            <person name="Haydock A.K."/>
            <person name="Kang A."/>
            <person name="Land M.L."/>
            <person name="Levy R."/>
            <person name="Lie T.J."/>
            <person name="Major T.A."/>
            <person name="Moore B.C."/>
            <person name="Porat I."/>
            <person name="Palmeiri A."/>
            <person name="Rouse G."/>
            <person name="Saenphimmachak C."/>
            <person name="Soell D."/>
            <person name="Van Dien S."/>
            <person name="Wang T."/>
            <person name="Whitman W.B."/>
            <person name="Xia Q."/>
            <person name="Zhang Y."/>
            <person name="Larimer F.W."/>
            <person name="Olson M.V."/>
            <person name="Leigh J.A."/>
        </authorList>
    </citation>
    <scope>NUCLEOTIDE SEQUENCE [LARGE SCALE GENOMIC DNA]</scope>
    <source>
        <strain>DSM 14266 / JCM 13030 / NBRC 101832 / S2 / LL</strain>
    </source>
</reference>